<protein>
    <recommendedName>
        <fullName>Methylamine dehydrogenase heavy chain</fullName>
        <shortName>MADH</shortName>
        <ecNumber>1.4.9.1</ecNumber>
    </recommendedName>
    <alternativeName>
        <fullName>Methylamine dehydrogenase (amicyanin)</fullName>
    </alternativeName>
</protein>
<organism>
    <name type="scientific">Methylobacillus flagellatus (strain ATCC 51484 / DSM 6875 / VKM B-1610 / KT)</name>
    <dbReference type="NCBI Taxonomy" id="265072"/>
    <lineage>
        <taxon>Bacteria</taxon>
        <taxon>Pseudomonadati</taxon>
        <taxon>Pseudomonadota</taxon>
        <taxon>Betaproteobacteria</taxon>
        <taxon>Nitrosomonadales</taxon>
        <taxon>Methylophilaceae</taxon>
        <taxon>Methylobacillus</taxon>
    </lineage>
</organism>
<proteinExistence type="inferred from homology"/>
<keyword id="KW-0249">Electron transport</keyword>
<keyword id="KW-0560">Oxidoreductase</keyword>
<keyword id="KW-0574">Periplasm</keyword>
<keyword id="KW-1185">Reference proteome</keyword>
<keyword id="KW-0732">Signal</keyword>
<keyword id="KW-0813">Transport</keyword>
<evidence type="ECO:0000255" key="1"/>
<evidence type="ECO:0000305" key="2"/>
<comment type="function">
    <text>Methylamine dehydrogenase carries out the oxidation of methylamine. Electrons are passed from methylamine dehydrogenase to amicyanin.</text>
</comment>
<comment type="catalytic activity">
    <reaction>
        <text>2 oxidized [amicyanin] + methylamine + H2O = 2 reduced [amicyanin] + formaldehyde + NH4(+) + 2 H(+)</text>
        <dbReference type="Rhea" id="RHEA:30207"/>
        <dbReference type="Rhea" id="RHEA-COMP:11100"/>
        <dbReference type="Rhea" id="RHEA-COMP:11101"/>
        <dbReference type="ChEBI" id="CHEBI:15377"/>
        <dbReference type="ChEBI" id="CHEBI:15378"/>
        <dbReference type="ChEBI" id="CHEBI:16842"/>
        <dbReference type="ChEBI" id="CHEBI:28938"/>
        <dbReference type="ChEBI" id="CHEBI:29036"/>
        <dbReference type="ChEBI" id="CHEBI:49552"/>
        <dbReference type="ChEBI" id="CHEBI:59338"/>
        <dbReference type="EC" id="1.4.9.1"/>
    </reaction>
</comment>
<comment type="subunit">
    <text>Tetramer of two light and two heavy chains.</text>
</comment>
<comment type="subcellular location">
    <subcellularLocation>
        <location>Periplasm</location>
    </subcellularLocation>
</comment>
<comment type="similarity">
    <text evidence="2">Belongs to the aromatic amine dehydrogenase heavy chain family.</text>
</comment>
<feature type="signal peptide" evidence="1">
    <location>
        <begin position="1"/>
        <end position="27"/>
    </location>
</feature>
<feature type="chain" id="PRO_0000025578" description="Methylamine dehydrogenase heavy chain">
    <location>
        <begin position="28"/>
        <end position="400"/>
    </location>
</feature>
<accession>Q50420</accession>
<accession>Q1H3W9</accession>
<accession>Q50413</accession>
<dbReference type="EC" id="1.4.9.1"/>
<dbReference type="EMBL" id="AF188997">
    <property type="protein sequence ID" value="AAC41469.2"/>
    <property type="molecule type" value="Genomic_DNA"/>
</dbReference>
<dbReference type="EMBL" id="CP000284">
    <property type="protein sequence ID" value="ABE48818.1"/>
    <property type="molecule type" value="Genomic_DNA"/>
</dbReference>
<dbReference type="RefSeq" id="WP_011478915.1">
    <property type="nucleotide sequence ID" value="NC_007947.1"/>
</dbReference>
<dbReference type="SMR" id="Q50420"/>
<dbReference type="STRING" id="265072.Mfla_0548"/>
<dbReference type="KEGG" id="mfa:Mfla_0548"/>
<dbReference type="eggNOG" id="COG3391">
    <property type="taxonomic scope" value="Bacteria"/>
</dbReference>
<dbReference type="HOGENOM" id="CLU_059384_0_0_4"/>
<dbReference type="Proteomes" id="UP000002440">
    <property type="component" value="Chromosome"/>
</dbReference>
<dbReference type="GO" id="GO:0042597">
    <property type="term" value="C:periplasmic space"/>
    <property type="evidence" value="ECO:0007669"/>
    <property type="project" value="UniProtKB-SubCell"/>
</dbReference>
<dbReference type="GO" id="GO:0030058">
    <property type="term" value="F:aliphatic amine dehydrogenase activity"/>
    <property type="evidence" value="ECO:0007669"/>
    <property type="project" value="InterPro"/>
</dbReference>
<dbReference type="GO" id="GO:0052876">
    <property type="term" value="F:methylamine dehydrogenase (amicyanin) activity"/>
    <property type="evidence" value="ECO:0007669"/>
    <property type="project" value="UniProtKB-EC"/>
</dbReference>
<dbReference type="GO" id="GO:0030416">
    <property type="term" value="P:methylamine metabolic process"/>
    <property type="evidence" value="ECO:0007669"/>
    <property type="project" value="InterPro"/>
</dbReference>
<dbReference type="Gene3D" id="2.130.10.10">
    <property type="entry name" value="YVTN repeat-like/Quinoprotein amine dehydrogenase"/>
    <property type="match status" value="1"/>
</dbReference>
<dbReference type="InterPro" id="IPR051200">
    <property type="entry name" value="Host-pathogen_enzymatic-act"/>
</dbReference>
<dbReference type="InterPro" id="IPR013476">
    <property type="entry name" value="MeN_DH_Hvc"/>
</dbReference>
<dbReference type="InterPro" id="IPR009451">
    <property type="entry name" value="Metamine_DH_Hvc"/>
</dbReference>
<dbReference type="InterPro" id="IPR011044">
    <property type="entry name" value="Quino_amine_DH_bsu"/>
</dbReference>
<dbReference type="InterPro" id="IPR015943">
    <property type="entry name" value="WD40/YVTN_repeat-like_dom_sf"/>
</dbReference>
<dbReference type="NCBIfam" id="TIGR02658">
    <property type="entry name" value="TTQ_MADH_Hv"/>
    <property type="match status" value="1"/>
</dbReference>
<dbReference type="PANTHER" id="PTHR47197:SF3">
    <property type="entry name" value="DIHYDRO-HEME D1 DEHYDROGENASE"/>
    <property type="match status" value="1"/>
</dbReference>
<dbReference type="PANTHER" id="PTHR47197">
    <property type="entry name" value="PROTEIN NIRF"/>
    <property type="match status" value="1"/>
</dbReference>
<dbReference type="Pfam" id="PF06433">
    <property type="entry name" value="Me-amine-dh_H"/>
    <property type="match status" value="1"/>
</dbReference>
<dbReference type="SUPFAM" id="SSF50969">
    <property type="entry name" value="YVTN repeat-like/Quinoprotein amine dehydrogenase"/>
    <property type="match status" value="1"/>
</dbReference>
<name>DHMH_METFK</name>
<sequence length="400" mass="44330">MTTFQPGRLAGQLAATALLAATCSAFAADAPTTVPSSLGAIGTTPTLDNITMEPGLPSDAKRVYVLDPGHFHVTTTVYTIDGNKNNLLGMTDTGKLANVMLSSDGKFFVTSNTTYSRIARGKRDDYVEVIDAQSHKVLADIDIPEGRFLTGVMNRMASLSTDNKYMLFQQFAPSPAVGLVDLEKKSFVKMMDIPDCYQIFPVPNQSFYMHCRDGSLQQFGYDDKGNLKPMKPTKVFHGEDDYLFVNPYYSNGSGRLVWPTYEGRIFQAKLTDKKVDFMKPFELFTEAEKKANWRPGGWQVVAYHKARNEIYVLADQRAKWTHVTASRYVFVVDGTTGKRLRRIDLGHEIDGISVTQDANPNLYAVSAEAKTLFTFNAVTGKETGKVDELGRAPTISLTMD</sequence>
<reference key="1">
    <citation type="journal article" date="1997" name="Microbiology">
        <title>Organization of methylamine utilization genes (mau) in 'Methylobacillus flagellatum ' KT and analysis of mau mutants.</title>
        <authorList>
            <person name="Gak E.R."/>
            <person name="Tsygankov Y.D."/>
            <person name="Chistoserdov A.Y."/>
        </authorList>
    </citation>
    <scope>NUCLEOTIDE SEQUENCE [GENOMIC DNA]</scope>
</reference>
<reference key="2">
    <citation type="submission" date="2006-03" db="EMBL/GenBank/DDBJ databases">
        <title>Complete sequence of Methylobacillus flagellatus KT.</title>
        <authorList>
            <consortium name="US DOE Joint Genome Institute"/>
            <person name="Copeland A."/>
            <person name="Lucas S."/>
            <person name="Lapidus A."/>
            <person name="Barry K."/>
            <person name="Detter J.C."/>
            <person name="Glavina del Rio T."/>
            <person name="Hammon N."/>
            <person name="Israni S."/>
            <person name="Dalin E."/>
            <person name="Tice H."/>
            <person name="Pitluck S."/>
            <person name="Brettin T."/>
            <person name="Bruce D."/>
            <person name="Han C."/>
            <person name="Tapia R."/>
            <person name="Saunders E."/>
            <person name="Gilna P."/>
            <person name="Schmutz J."/>
            <person name="Larimer F."/>
            <person name="Land M."/>
            <person name="Kyrpides N."/>
            <person name="Anderson I."/>
            <person name="Richardson P."/>
        </authorList>
    </citation>
    <scope>NUCLEOTIDE SEQUENCE [LARGE SCALE GENOMIC DNA]</scope>
    <source>
        <strain>ATCC 51484 / DSM 6875 / VKM B-1610 / KT</strain>
    </source>
</reference>
<reference key="3">
    <citation type="journal article" date="1995" name="J. Bacteriol.">
        <title>Cloning, sequencing, and mutation of a gene for azurin in Methylobacillus flagellatum KT.</title>
        <authorList>
            <person name="Gak E.R."/>
            <person name="Chistoserdov A.Y."/>
            <person name="Lidstrom M.E."/>
        </authorList>
    </citation>
    <scope>NUCLEOTIDE SEQUENCE [GENOMIC DNA] OF 1-68 AND 332-400</scope>
</reference>
<gene>
    <name type="primary">mauB</name>
    <name type="ordered locus">Mfla_0548</name>
</gene>